<protein>
    <recommendedName>
        <fullName evidence="6">Probable serine/threonine-protein kinase PBL23</fullName>
        <ecNumber evidence="6">2.7.11.1</ecNumber>
    </recommendedName>
    <alternativeName>
        <fullName evidence="5">PBS1-like protein 23</fullName>
    </alternativeName>
</protein>
<gene>
    <name evidence="5" type="primary">PBL23</name>
    <name evidence="7" type="ordered locus">At3g20530</name>
    <name evidence="8" type="ORF">K10D20.7</name>
</gene>
<dbReference type="EC" id="2.7.11.1" evidence="6"/>
<dbReference type="EMBL" id="AP000410">
    <property type="protein sequence ID" value="BAB01161.1"/>
    <property type="status" value="ALT_SEQ"/>
    <property type="molecule type" value="Genomic_DNA"/>
</dbReference>
<dbReference type="EMBL" id="CP002686">
    <property type="protein sequence ID" value="AEE76391.1"/>
    <property type="molecule type" value="Genomic_DNA"/>
</dbReference>
<dbReference type="EMBL" id="BT003881">
    <property type="protein sequence ID" value="AAO41930.1"/>
    <property type="molecule type" value="mRNA"/>
</dbReference>
<dbReference type="RefSeq" id="NP_188689.1">
    <property type="nucleotide sequence ID" value="NM_112945.4"/>
</dbReference>
<dbReference type="SMR" id="F4JEQ2"/>
<dbReference type="FunCoup" id="F4JEQ2">
    <property type="interactions" value="2266"/>
</dbReference>
<dbReference type="STRING" id="3702.F4JEQ2"/>
<dbReference type="GlyGen" id="F4JEQ2">
    <property type="glycosylation" value="1 site"/>
</dbReference>
<dbReference type="PaxDb" id="3702-AT3G20530.1"/>
<dbReference type="ProteomicsDB" id="236277"/>
<dbReference type="EnsemblPlants" id="AT3G20530.1">
    <property type="protein sequence ID" value="AT3G20530.1"/>
    <property type="gene ID" value="AT3G20530"/>
</dbReference>
<dbReference type="GeneID" id="821599"/>
<dbReference type="Gramene" id="AT3G20530.1">
    <property type="protein sequence ID" value="AT3G20530.1"/>
    <property type="gene ID" value="AT3G20530"/>
</dbReference>
<dbReference type="KEGG" id="ath:AT3G20530"/>
<dbReference type="Araport" id="AT3G20530"/>
<dbReference type="TAIR" id="AT3G20530">
    <property type="gene designation" value="PBL23"/>
</dbReference>
<dbReference type="eggNOG" id="KOG1187">
    <property type="taxonomic scope" value="Eukaryota"/>
</dbReference>
<dbReference type="HOGENOM" id="CLU_000288_21_4_1"/>
<dbReference type="InParanoid" id="F4JEQ2"/>
<dbReference type="OMA" id="GQVEPNQ"/>
<dbReference type="OrthoDB" id="4062651at2759"/>
<dbReference type="PRO" id="PR:F4JEQ2"/>
<dbReference type="Proteomes" id="UP000006548">
    <property type="component" value="Chromosome 3"/>
</dbReference>
<dbReference type="ExpressionAtlas" id="F4JEQ2">
    <property type="expression patterns" value="baseline and differential"/>
</dbReference>
<dbReference type="GO" id="GO:0005777">
    <property type="term" value="C:peroxisome"/>
    <property type="evidence" value="ECO:0000314"/>
    <property type="project" value="TAIR"/>
</dbReference>
<dbReference type="GO" id="GO:0005886">
    <property type="term" value="C:plasma membrane"/>
    <property type="evidence" value="ECO:0007669"/>
    <property type="project" value="UniProtKB-SubCell"/>
</dbReference>
<dbReference type="GO" id="GO:0005524">
    <property type="term" value="F:ATP binding"/>
    <property type="evidence" value="ECO:0007669"/>
    <property type="project" value="UniProtKB-KW"/>
</dbReference>
<dbReference type="GO" id="GO:0106310">
    <property type="term" value="F:protein serine kinase activity"/>
    <property type="evidence" value="ECO:0007669"/>
    <property type="project" value="RHEA"/>
</dbReference>
<dbReference type="GO" id="GO:0004674">
    <property type="term" value="F:protein serine/threonine kinase activity"/>
    <property type="evidence" value="ECO:0007669"/>
    <property type="project" value="UniProtKB-KW"/>
</dbReference>
<dbReference type="GO" id="GO:0006952">
    <property type="term" value="P:defense response"/>
    <property type="evidence" value="ECO:0007669"/>
    <property type="project" value="UniProtKB-KW"/>
</dbReference>
<dbReference type="CDD" id="cd14066">
    <property type="entry name" value="STKc_IRAK"/>
    <property type="match status" value="1"/>
</dbReference>
<dbReference type="FunFam" id="3.30.200.20:FF:000244">
    <property type="entry name" value="Serine/threonine-protein kinase CDL1-like"/>
    <property type="match status" value="1"/>
</dbReference>
<dbReference type="FunFam" id="1.10.510.10:FF:000032">
    <property type="entry name" value="Serine/threonine-protein kinase PBS1"/>
    <property type="match status" value="1"/>
</dbReference>
<dbReference type="Gene3D" id="3.30.200.20">
    <property type="entry name" value="Phosphorylase Kinase, domain 1"/>
    <property type="match status" value="1"/>
</dbReference>
<dbReference type="Gene3D" id="1.10.510.10">
    <property type="entry name" value="Transferase(Phosphotransferase) domain 1"/>
    <property type="match status" value="1"/>
</dbReference>
<dbReference type="InterPro" id="IPR011009">
    <property type="entry name" value="Kinase-like_dom_sf"/>
</dbReference>
<dbReference type="InterPro" id="IPR000719">
    <property type="entry name" value="Prot_kinase_dom"/>
</dbReference>
<dbReference type="InterPro" id="IPR017441">
    <property type="entry name" value="Protein_kinase_ATP_BS"/>
</dbReference>
<dbReference type="InterPro" id="IPR008271">
    <property type="entry name" value="Ser/Thr_kinase_AS"/>
</dbReference>
<dbReference type="PANTHER" id="PTHR47985">
    <property type="entry name" value="OS07G0668900 PROTEIN"/>
    <property type="match status" value="1"/>
</dbReference>
<dbReference type="PANTHER" id="PTHR47985:SF39">
    <property type="entry name" value="SERINE_THREONINE-PROTEIN KINASE PBL23-RELATED"/>
    <property type="match status" value="1"/>
</dbReference>
<dbReference type="Pfam" id="PF00069">
    <property type="entry name" value="Pkinase"/>
    <property type="match status" value="1"/>
</dbReference>
<dbReference type="SUPFAM" id="SSF56112">
    <property type="entry name" value="Protein kinase-like (PK-like)"/>
    <property type="match status" value="1"/>
</dbReference>
<dbReference type="PROSITE" id="PS00107">
    <property type="entry name" value="PROTEIN_KINASE_ATP"/>
    <property type="match status" value="1"/>
</dbReference>
<dbReference type="PROSITE" id="PS50011">
    <property type="entry name" value="PROTEIN_KINASE_DOM"/>
    <property type="match status" value="1"/>
</dbReference>
<dbReference type="PROSITE" id="PS00108">
    <property type="entry name" value="PROTEIN_KINASE_ST"/>
    <property type="match status" value="1"/>
</dbReference>
<accession>F4JEQ2</accession>
<accession>Q84WF3</accession>
<accession>Q9LJU5</accession>
<reference key="1">
    <citation type="journal article" date="2000" name="DNA Res.">
        <title>Structural analysis of Arabidopsis thaliana chromosome 3. II. Sequence features of the 4,251,695 bp regions covered by 90 P1, TAC and BAC clones.</title>
        <authorList>
            <person name="Kaneko T."/>
            <person name="Katoh T."/>
            <person name="Sato S."/>
            <person name="Nakamura Y."/>
            <person name="Asamizu E."/>
            <person name="Tabata S."/>
        </authorList>
    </citation>
    <scope>NUCLEOTIDE SEQUENCE [LARGE SCALE GENOMIC DNA]</scope>
    <source>
        <strain>cv. Columbia</strain>
    </source>
</reference>
<reference key="2">
    <citation type="journal article" date="2017" name="Plant J.">
        <title>Araport11: a complete reannotation of the Arabidopsis thaliana reference genome.</title>
        <authorList>
            <person name="Cheng C.Y."/>
            <person name="Krishnakumar V."/>
            <person name="Chan A.P."/>
            <person name="Thibaud-Nissen F."/>
            <person name="Schobel S."/>
            <person name="Town C.D."/>
        </authorList>
    </citation>
    <scope>GENOME REANNOTATION</scope>
    <source>
        <strain>cv. Columbia</strain>
    </source>
</reference>
<reference key="3">
    <citation type="journal article" date="2003" name="Science">
        <title>Empirical analysis of transcriptional activity in the Arabidopsis genome.</title>
        <authorList>
            <person name="Yamada K."/>
            <person name="Lim J."/>
            <person name="Dale J.M."/>
            <person name="Chen H."/>
            <person name="Shinn P."/>
            <person name="Palm C.J."/>
            <person name="Southwick A.M."/>
            <person name="Wu H.C."/>
            <person name="Kim C.J."/>
            <person name="Nguyen M."/>
            <person name="Pham P.K."/>
            <person name="Cheuk R.F."/>
            <person name="Karlin-Newmann G."/>
            <person name="Liu S.X."/>
            <person name="Lam B."/>
            <person name="Sakano H."/>
            <person name="Wu T."/>
            <person name="Yu G."/>
            <person name="Miranda M."/>
            <person name="Quach H.L."/>
            <person name="Tripp M."/>
            <person name="Chang C.H."/>
            <person name="Lee J.M."/>
            <person name="Toriumi M.J."/>
            <person name="Chan M.M."/>
            <person name="Tang C.C."/>
            <person name="Onodera C.S."/>
            <person name="Deng J.M."/>
            <person name="Akiyama K."/>
            <person name="Ansari Y."/>
            <person name="Arakawa T."/>
            <person name="Banh J."/>
            <person name="Banno F."/>
            <person name="Bowser L."/>
            <person name="Brooks S.Y."/>
            <person name="Carninci P."/>
            <person name="Chao Q."/>
            <person name="Choy N."/>
            <person name="Enju A."/>
            <person name="Goldsmith A.D."/>
            <person name="Gurjal M."/>
            <person name="Hansen N.F."/>
            <person name="Hayashizaki Y."/>
            <person name="Johnson-Hopson C."/>
            <person name="Hsuan V.W."/>
            <person name="Iida K."/>
            <person name="Karnes M."/>
            <person name="Khan S."/>
            <person name="Koesema E."/>
            <person name="Ishida J."/>
            <person name="Jiang P.X."/>
            <person name="Jones T."/>
            <person name="Kawai J."/>
            <person name="Kamiya A."/>
            <person name="Meyers C."/>
            <person name="Nakajima M."/>
            <person name="Narusaka M."/>
            <person name="Seki M."/>
            <person name="Sakurai T."/>
            <person name="Satou M."/>
            <person name="Tamse R."/>
            <person name="Vaysberg M."/>
            <person name="Wallender E.K."/>
            <person name="Wong C."/>
            <person name="Yamamura Y."/>
            <person name="Yuan S."/>
            <person name="Shinozaki K."/>
            <person name="Davis R.W."/>
            <person name="Theologis A."/>
            <person name="Ecker J.R."/>
        </authorList>
    </citation>
    <scope>NUCLEOTIDE SEQUENCE [LARGE SCALE MRNA]</scope>
    <source>
        <strain>cv. Columbia</strain>
    </source>
</reference>
<reference key="4">
    <citation type="journal article" date="2010" name="Cell Host Microbe">
        <title>Receptor-like cytoplasmic kinases integrate signaling from multiple plant immune receptors and are targeted by a Pseudomonas syringae effector.</title>
        <authorList>
            <person name="Zhang J."/>
            <person name="Li W."/>
            <person name="Xiang T."/>
            <person name="Liu Z."/>
            <person name="Laluk K."/>
            <person name="Ding X."/>
            <person name="Zou Y."/>
            <person name="Gao M."/>
            <person name="Zhang X."/>
            <person name="Chen S."/>
            <person name="Mengiste T."/>
            <person name="Zhang Y."/>
            <person name="Zhou J.M."/>
        </authorList>
    </citation>
    <scope>GENE FAMILY</scope>
    <scope>NOMENCLATURE</scope>
</reference>
<comment type="function">
    <text evidence="1">May be involved in plant defense signaling.</text>
</comment>
<comment type="catalytic activity">
    <reaction evidence="6">
        <text>L-seryl-[protein] + ATP = O-phospho-L-seryl-[protein] + ADP + H(+)</text>
        <dbReference type="Rhea" id="RHEA:17989"/>
        <dbReference type="Rhea" id="RHEA-COMP:9863"/>
        <dbReference type="Rhea" id="RHEA-COMP:11604"/>
        <dbReference type="ChEBI" id="CHEBI:15378"/>
        <dbReference type="ChEBI" id="CHEBI:29999"/>
        <dbReference type="ChEBI" id="CHEBI:30616"/>
        <dbReference type="ChEBI" id="CHEBI:83421"/>
        <dbReference type="ChEBI" id="CHEBI:456216"/>
        <dbReference type="EC" id="2.7.11.1"/>
    </reaction>
</comment>
<comment type="catalytic activity">
    <reaction evidence="6">
        <text>L-threonyl-[protein] + ATP = O-phospho-L-threonyl-[protein] + ADP + H(+)</text>
        <dbReference type="Rhea" id="RHEA:46608"/>
        <dbReference type="Rhea" id="RHEA-COMP:11060"/>
        <dbReference type="Rhea" id="RHEA-COMP:11605"/>
        <dbReference type="ChEBI" id="CHEBI:15378"/>
        <dbReference type="ChEBI" id="CHEBI:30013"/>
        <dbReference type="ChEBI" id="CHEBI:30616"/>
        <dbReference type="ChEBI" id="CHEBI:61977"/>
        <dbReference type="ChEBI" id="CHEBI:456216"/>
        <dbReference type="EC" id="2.7.11.1"/>
    </reaction>
</comment>
<comment type="subcellular location">
    <subcellularLocation>
        <location evidence="1">Cell membrane</location>
        <topology evidence="1">Lipid-anchor</topology>
    </subcellularLocation>
</comment>
<comment type="similarity">
    <text evidence="3">Belongs to the protein kinase superfamily. Ser/Thr protein kinase family.</text>
</comment>
<comment type="sequence caution" evidence="6">
    <conflict type="erroneous gene model prediction">
        <sequence resource="EMBL-CDS" id="BAB01161"/>
    </conflict>
</comment>
<keyword id="KW-0067">ATP-binding</keyword>
<keyword id="KW-1003">Cell membrane</keyword>
<keyword id="KW-0418">Kinase</keyword>
<keyword id="KW-0449">Lipoprotein</keyword>
<keyword id="KW-0472">Membrane</keyword>
<keyword id="KW-0547">Nucleotide-binding</keyword>
<keyword id="KW-0564">Palmitate</keyword>
<keyword id="KW-0611">Plant defense</keyword>
<keyword id="KW-1185">Reference proteome</keyword>
<keyword id="KW-0723">Serine/threonine-protein kinase</keyword>
<keyword id="KW-0808">Transferase</keyword>
<name>PBL23_ARATH</name>
<evidence type="ECO:0000250" key="1">
    <source>
        <dbReference type="UniProtKB" id="O48814"/>
    </source>
</evidence>
<evidence type="ECO:0000250" key="2">
    <source>
        <dbReference type="UniProtKB" id="Q9FE20"/>
    </source>
</evidence>
<evidence type="ECO:0000255" key="3">
    <source>
        <dbReference type="PROSITE-ProRule" id="PRU00159"/>
    </source>
</evidence>
<evidence type="ECO:0000256" key="4">
    <source>
        <dbReference type="SAM" id="MobiDB-lite"/>
    </source>
</evidence>
<evidence type="ECO:0000303" key="5">
    <source>
    </source>
</evidence>
<evidence type="ECO:0000305" key="6"/>
<evidence type="ECO:0000312" key="7">
    <source>
        <dbReference type="Araport" id="AT3G20530"/>
    </source>
</evidence>
<evidence type="ECO:0000312" key="8">
    <source>
        <dbReference type="EMBL" id="BAB01161.1"/>
    </source>
</evidence>
<organism>
    <name type="scientific">Arabidopsis thaliana</name>
    <name type="common">Mouse-ear cress</name>
    <dbReference type="NCBI Taxonomy" id="3702"/>
    <lineage>
        <taxon>Eukaryota</taxon>
        <taxon>Viridiplantae</taxon>
        <taxon>Streptophyta</taxon>
        <taxon>Embryophyta</taxon>
        <taxon>Tracheophyta</taxon>
        <taxon>Spermatophyta</taxon>
        <taxon>Magnoliopsida</taxon>
        <taxon>eudicotyledons</taxon>
        <taxon>Gunneridae</taxon>
        <taxon>Pentapetalae</taxon>
        <taxon>rosids</taxon>
        <taxon>malvids</taxon>
        <taxon>Brassicales</taxon>
        <taxon>Brassicaceae</taxon>
        <taxon>Camelineae</taxon>
        <taxon>Arabidopsis</taxon>
    </lineage>
</organism>
<feature type="chain" id="PRO_0000438615" description="Probable serine/threonine-protein kinase PBL23">
    <location>
        <begin position="1"/>
        <end position="386"/>
    </location>
</feature>
<feature type="domain" description="Protein kinase" evidence="3">
    <location>
        <begin position="82"/>
        <end position="360"/>
    </location>
</feature>
<feature type="region of interest" description="Disordered" evidence="4">
    <location>
        <begin position="365"/>
        <end position="386"/>
    </location>
</feature>
<feature type="compositionally biased region" description="Acidic residues" evidence="4">
    <location>
        <begin position="368"/>
        <end position="386"/>
    </location>
</feature>
<feature type="active site" description="Proton acceptor" evidence="3">
    <location>
        <position position="210"/>
    </location>
</feature>
<feature type="binding site" evidence="3">
    <location>
        <begin position="88"/>
        <end position="96"/>
    </location>
    <ligand>
        <name>ATP</name>
        <dbReference type="ChEBI" id="CHEBI:30616"/>
    </ligand>
</feature>
<feature type="binding site" evidence="3">
    <location>
        <position position="111"/>
    </location>
    <ligand>
        <name>ATP</name>
        <dbReference type="ChEBI" id="CHEBI:30616"/>
    </ligand>
</feature>
<feature type="lipid moiety-binding region" description="S-palmitoyl cysteine" evidence="2">
    <location>
        <position position="5"/>
    </location>
</feature>
<feature type="sequence conflict" description="In Ref. 3; AAO41930." evidence="6" ref="3">
    <original>T</original>
    <variation>I</variation>
    <location>
        <position position="241"/>
    </location>
</feature>
<sequence>MKINCLFCCMSHRRFNRRSSSRQSIKDCIDAKNNITTFDNISFKTDSSRRRYISEEIAKLGKGNISAHIFTFRELCVATKNFNPDNQLGEGGFGRVYKGQIETPEQVVAVKQLDRNGYQGNREFLVEVMMLSLLHHQNLVNLVGYCADGDQRILVYEYMQNGSLEDHLLELARNKKKPLDWDTRMKVAAGAARGLEYLHETADPPVIYRDFKASNILLDEEFNPKLSDFGLAKVGPTGGETHVSTRVMGTYGYCAPEYALTGQLTVKSDVYSFGVVFLEMITGRRVIDTTKPTEEQNLVTWASPLFKDRRKFTLMADPLLEGKYPIKGLYQALAVAAMCLQEEAATRPMMSDVVTALEYLAVTKTEEDGQTVEGEEEEEEDERSKL</sequence>
<proteinExistence type="evidence at transcript level"/>